<keyword id="KW-0687">Ribonucleoprotein</keyword>
<keyword id="KW-0689">Ribosomal protein</keyword>
<keyword id="KW-0694">RNA-binding</keyword>
<keyword id="KW-0699">rRNA-binding</keyword>
<sequence>MSRIGKKPVVIPSGVTINVAAGNKVEVKGAKATLSKTFSTDVTFSVADNVATITLNNNSKNAVAQSGTARAILSNMVEGVSKGFERKLKIIGVGYRAKAQGNELNLTLGFSHPVVYKLPQGITAETPAPTEIILKGADKELLGKVASEIREYRKPEPYKGKGVRYEDEYVAKKEAKKK</sequence>
<reference key="1">
    <citation type="journal article" date="2007" name="PLoS ONE">
        <title>Complete genomic characterization of a pathogenic A.II strain of Francisella tularensis subspecies tularensis.</title>
        <authorList>
            <person name="Beckstrom-Sternberg S.M."/>
            <person name="Auerbach R.K."/>
            <person name="Godbole S."/>
            <person name="Pearson J.V."/>
            <person name="Beckstrom-Sternberg J.S."/>
            <person name="Deng Z."/>
            <person name="Munk C."/>
            <person name="Kubota K."/>
            <person name="Zhou Y."/>
            <person name="Bruce D."/>
            <person name="Noronha J."/>
            <person name="Scheuermann R.H."/>
            <person name="Wang A."/>
            <person name="Wei X."/>
            <person name="Wang J."/>
            <person name="Hao J."/>
            <person name="Wagner D.M."/>
            <person name="Brettin T.S."/>
            <person name="Brown N."/>
            <person name="Gilna P."/>
            <person name="Keim P.S."/>
        </authorList>
    </citation>
    <scope>NUCLEOTIDE SEQUENCE [LARGE SCALE GENOMIC DNA]</scope>
    <source>
        <strain>WY96-3418</strain>
    </source>
</reference>
<accession>A4IZR9</accession>
<comment type="function">
    <text evidence="1">This protein binds to the 23S rRNA, and is important in its secondary structure. It is located near the subunit interface in the base of the L7/L12 stalk, and near the tRNA binding site of the peptidyltransferase center.</text>
</comment>
<comment type="subunit">
    <text evidence="1">Part of the 50S ribosomal subunit.</text>
</comment>
<comment type="similarity">
    <text evidence="1">Belongs to the universal ribosomal protein uL6 family.</text>
</comment>
<evidence type="ECO:0000255" key="1">
    <source>
        <dbReference type="HAMAP-Rule" id="MF_01365"/>
    </source>
</evidence>
<evidence type="ECO:0000305" key="2"/>
<protein>
    <recommendedName>
        <fullName evidence="1">Large ribosomal subunit protein uL6</fullName>
    </recommendedName>
    <alternativeName>
        <fullName evidence="2">50S ribosomal protein L6</fullName>
    </alternativeName>
</protein>
<dbReference type="EMBL" id="CP000608">
    <property type="protein sequence ID" value="ABO47419.1"/>
    <property type="molecule type" value="Genomic_DNA"/>
</dbReference>
<dbReference type="RefSeq" id="WP_003027187.1">
    <property type="nucleotide sequence ID" value="NC_009257.1"/>
</dbReference>
<dbReference type="SMR" id="A4IZR9"/>
<dbReference type="KEGG" id="ftw:FTW_1743"/>
<dbReference type="HOGENOM" id="CLU_065464_1_2_6"/>
<dbReference type="GO" id="GO:0022625">
    <property type="term" value="C:cytosolic large ribosomal subunit"/>
    <property type="evidence" value="ECO:0007669"/>
    <property type="project" value="TreeGrafter"/>
</dbReference>
<dbReference type="GO" id="GO:0019843">
    <property type="term" value="F:rRNA binding"/>
    <property type="evidence" value="ECO:0007669"/>
    <property type="project" value="UniProtKB-UniRule"/>
</dbReference>
<dbReference type="GO" id="GO:0003735">
    <property type="term" value="F:structural constituent of ribosome"/>
    <property type="evidence" value="ECO:0007669"/>
    <property type="project" value="InterPro"/>
</dbReference>
<dbReference type="GO" id="GO:0002181">
    <property type="term" value="P:cytoplasmic translation"/>
    <property type="evidence" value="ECO:0007669"/>
    <property type="project" value="TreeGrafter"/>
</dbReference>
<dbReference type="FunFam" id="3.90.930.12:FF:000001">
    <property type="entry name" value="50S ribosomal protein L6"/>
    <property type="match status" value="1"/>
</dbReference>
<dbReference type="Gene3D" id="3.90.930.12">
    <property type="entry name" value="Ribosomal protein L6, alpha-beta domain"/>
    <property type="match status" value="2"/>
</dbReference>
<dbReference type="HAMAP" id="MF_01365_B">
    <property type="entry name" value="Ribosomal_uL6_B"/>
    <property type="match status" value="1"/>
</dbReference>
<dbReference type="InterPro" id="IPR000702">
    <property type="entry name" value="Ribosomal_uL6-like"/>
</dbReference>
<dbReference type="InterPro" id="IPR036789">
    <property type="entry name" value="Ribosomal_uL6-like_a/b-dom_sf"/>
</dbReference>
<dbReference type="InterPro" id="IPR020040">
    <property type="entry name" value="Ribosomal_uL6_a/b-dom"/>
</dbReference>
<dbReference type="InterPro" id="IPR019906">
    <property type="entry name" value="Ribosomal_uL6_bac-type"/>
</dbReference>
<dbReference type="InterPro" id="IPR002358">
    <property type="entry name" value="Ribosomal_uL6_CS"/>
</dbReference>
<dbReference type="NCBIfam" id="TIGR03654">
    <property type="entry name" value="L6_bact"/>
    <property type="match status" value="1"/>
</dbReference>
<dbReference type="PANTHER" id="PTHR11655">
    <property type="entry name" value="60S/50S RIBOSOMAL PROTEIN L6/L9"/>
    <property type="match status" value="1"/>
</dbReference>
<dbReference type="PANTHER" id="PTHR11655:SF14">
    <property type="entry name" value="LARGE RIBOSOMAL SUBUNIT PROTEIN UL6M"/>
    <property type="match status" value="1"/>
</dbReference>
<dbReference type="Pfam" id="PF00347">
    <property type="entry name" value="Ribosomal_L6"/>
    <property type="match status" value="2"/>
</dbReference>
<dbReference type="PIRSF" id="PIRSF002162">
    <property type="entry name" value="Ribosomal_L6"/>
    <property type="match status" value="1"/>
</dbReference>
<dbReference type="PRINTS" id="PR00059">
    <property type="entry name" value="RIBOSOMALL6"/>
</dbReference>
<dbReference type="SUPFAM" id="SSF56053">
    <property type="entry name" value="Ribosomal protein L6"/>
    <property type="match status" value="2"/>
</dbReference>
<dbReference type="PROSITE" id="PS00525">
    <property type="entry name" value="RIBOSOMAL_L6_1"/>
    <property type="match status" value="1"/>
</dbReference>
<gene>
    <name evidence="1" type="primary">rplF</name>
    <name type="ordered locus">FTW_1743</name>
</gene>
<name>RL6_FRATW</name>
<organism>
    <name type="scientific">Francisella tularensis subsp. tularensis (strain WY96-3418)</name>
    <dbReference type="NCBI Taxonomy" id="418136"/>
    <lineage>
        <taxon>Bacteria</taxon>
        <taxon>Pseudomonadati</taxon>
        <taxon>Pseudomonadota</taxon>
        <taxon>Gammaproteobacteria</taxon>
        <taxon>Thiotrichales</taxon>
        <taxon>Francisellaceae</taxon>
        <taxon>Francisella</taxon>
    </lineage>
</organism>
<feature type="chain" id="PRO_1000055234" description="Large ribosomal subunit protein uL6">
    <location>
        <begin position="1"/>
        <end position="178"/>
    </location>
</feature>
<proteinExistence type="inferred from homology"/>